<comment type="function">
    <text evidence="1">Required for the expression of anaerobic nitric oxide (NO) reductase, acts as a transcriptional activator for at least the norVW operon. Activation also requires sigma-54.</text>
</comment>
<comment type="pathway">
    <text evidence="1">Nitrogen metabolism; nitric oxide reduction.</text>
</comment>
<feature type="chain" id="PRO_1000141202" description="Anaerobic nitric oxide reductase transcription regulator NorR">
    <location>
        <begin position="1"/>
        <end position="506"/>
    </location>
</feature>
<feature type="domain" description="Sigma-54 factor interaction" evidence="1">
    <location>
        <begin position="187"/>
        <end position="416"/>
    </location>
</feature>
<feature type="DNA-binding region" description="H-T-H motif" evidence="1">
    <location>
        <begin position="481"/>
        <end position="500"/>
    </location>
</feature>
<feature type="binding site" evidence="1">
    <location>
        <begin position="215"/>
        <end position="222"/>
    </location>
    <ligand>
        <name>ATP</name>
        <dbReference type="ChEBI" id="CHEBI:30616"/>
    </ligand>
</feature>
<feature type="binding site" evidence="1">
    <location>
        <begin position="278"/>
        <end position="287"/>
    </location>
    <ligand>
        <name>ATP</name>
        <dbReference type="ChEBI" id="CHEBI:30616"/>
    </ligand>
</feature>
<feature type="modified residue" description="4-aspartylphosphate" evidence="1">
    <location>
        <position position="57"/>
    </location>
</feature>
<protein>
    <recommendedName>
        <fullName evidence="1">Anaerobic nitric oxide reductase transcription regulator NorR</fullName>
    </recommendedName>
</protein>
<sequence>MSFSVEVLAGIAIELQRGIGHQDRFQRLITTLRQVLACDASALLRYESRQFIPLAIDGLAQDVLGRRFTLEGHPRLEAIARAGDVVRFPADSDLPDPYDGLIPGQESLKVHACVGLPLFAGQNLIGALTLDAMTPEQFEVFSDEELRLVAALAAGALSNALLIEQLESQNMLPGSSGVFEPIKETHMIGLSPAMTQLKKEIEIVAGSDLNVLIGGETGTGKELVAKAIHQGSPRAVNPLVYLNCAALPESVAESELFGHVKGAFTGAISNRSGKFEMADNGTLFLDEIGELSLALQAKLLRVLQYGDIQRVGDDRSLRVDVRVLAATNRDLREEVLAGRFRADLFHRLSVFPLFVPPLRERGDDVVLLAGYFCEQCRLRLGLSRVVLSPGARRHLLNYGWPGNVRELEHAIHRAVVLARATRAGDEVILEAQHFALSEDVLPAPPAESFLALPTCRNLRESTENFQREMIRQALAQNNHNWAASARALETDVANLHRLAKRLGLKD</sequence>
<organism>
    <name type="scientific">Salmonella schwarzengrund (strain CVM19633)</name>
    <dbReference type="NCBI Taxonomy" id="439843"/>
    <lineage>
        <taxon>Bacteria</taxon>
        <taxon>Pseudomonadati</taxon>
        <taxon>Pseudomonadota</taxon>
        <taxon>Gammaproteobacteria</taxon>
        <taxon>Enterobacterales</taxon>
        <taxon>Enterobacteriaceae</taxon>
        <taxon>Salmonella</taxon>
    </lineage>
</organism>
<keyword id="KW-0067">ATP-binding</keyword>
<keyword id="KW-0238">DNA-binding</keyword>
<keyword id="KW-0547">Nucleotide-binding</keyword>
<keyword id="KW-0597">Phosphoprotein</keyword>
<keyword id="KW-0804">Transcription</keyword>
<keyword id="KW-0805">Transcription regulation</keyword>
<dbReference type="EMBL" id="CP001127">
    <property type="protein sequence ID" value="ACF92026.1"/>
    <property type="molecule type" value="Genomic_DNA"/>
</dbReference>
<dbReference type="RefSeq" id="WP_000010814.1">
    <property type="nucleotide sequence ID" value="NC_011094.1"/>
</dbReference>
<dbReference type="SMR" id="B4TT16"/>
<dbReference type="KEGG" id="sew:SeSA_A2990"/>
<dbReference type="HOGENOM" id="CLU_000445_125_2_6"/>
<dbReference type="UniPathway" id="UPA00638"/>
<dbReference type="Proteomes" id="UP000001865">
    <property type="component" value="Chromosome"/>
</dbReference>
<dbReference type="GO" id="GO:0005524">
    <property type="term" value="F:ATP binding"/>
    <property type="evidence" value="ECO:0007669"/>
    <property type="project" value="UniProtKB-UniRule"/>
</dbReference>
<dbReference type="GO" id="GO:0016887">
    <property type="term" value="F:ATP hydrolysis activity"/>
    <property type="evidence" value="ECO:0007669"/>
    <property type="project" value="InterPro"/>
</dbReference>
<dbReference type="GO" id="GO:0003677">
    <property type="term" value="F:DNA binding"/>
    <property type="evidence" value="ECO:0007669"/>
    <property type="project" value="UniProtKB-KW"/>
</dbReference>
<dbReference type="GO" id="GO:0003700">
    <property type="term" value="F:DNA-binding transcription factor activity"/>
    <property type="evidence" value="ECO:0007669"/>
    <property type="project" value="UniProtKB-UniRule"/>
</dbReference>
<dbReference type="GO" id="GO:0000160">
    <property type="term" value="P:phosphorelay signal transduction system"/>
    <property type="evidence" value="ECO:0007669"/>
    <property type="project" value="UniProtKB-UniRule"/>
</dbReference>
<dbReference type="CDD" id="cd00009">
    <property type="entry name" value="AAA"/>
    <property type="match status" value="1"/>
</dbReference>
<dbReference type="FunFam" id="1.10.8.60:FF:000045">
    <property type="entry name" value="Anaerobic nitric oxide reductase transcription regulator NorR"/>
    <property type="match status" value="1"/>
</dbReference>
<dbReference type="FunFam" id="3.30.450.40:FF:000021">
    <property type="entry name" value="Anaerobic nitric oxide reductase transcription regulator NorR"/>
    <property type="match status" value="1"/>
</dbReference>
<dbReference type="FunFam" id="3.40.50.300:FF:000006">
    <property type="entry name" value="DNA-binding transcriptional regulator NtrC"/>
    <property type="match status" value="1"/>
</dbReference>
<dbReference type="Gene3D" id="1.10.8.60">
    <property type="match status" value="1"/>
</dbReference>
<dbReference type="Gene3D" id="3.30.450.40">
    <property type="match status" value="1"/>
</dbReference>
<dbReference type="Gene3D" id="1.10.10.60">
    <property type="entry name" value="Homeodomain-like"/>
    <property type="match status" value="1"/>
</dbReference>
<dbReference type="Gene3D" id="3.40.50.300">
    <property type="entry name" value="P-loop containing nucleotide triphosphate hydrolases"/>
    <property type="match status" value="1"/>
</dbReference>
<dbReference type="HAMAP" id="MF_01314">
    <property type="entry name" value="NorR"/>
    <property type="match status" value="1"/>
</dbReference>
<dbReference type="InterPro" id="IPR003593">
    <property type="entry name" value="AAA+_ATPase"/>
</dbReference>
<dbReference type="InterPro" id="IPR003018">
    <property type="entry name" value="GAF"/>
</dbReference>
<dbReference type="InterPro" id="IPR029016">
    <property type="entry name" value="GAF-like_dom_sf"/>
</dbReference>
<dbReference type="InterPro" id="IPR009057">
    <property type="entry name" value="Homeodomain-like_sf"/>
</dbReference>
<dbReference type="InterPro" id="IPR023944">
    <property type="entry name" value="NorR"/>
</dbReference>
<dbReference type="InterPro" id="IPR027417">
    <property type="entry name" value="P-loop_NTPase"/>
</dbReference>
<dbReference type="InterPro" id="IPR002078">
    <property type="entry name" value="Sigma_54_int"/>
</dbReference>
<dbReference type="InterPro" id="IPR025662">
    <property type="entry name" value="Sigma_54_int_dom_ATP-bd_1"/>
</dbReference>
<dbReference type="InterPro" id="IPR025943">
    <property type="entry name" value="Sigma_54_int_dom_ATP-bd_2"/>
</dbReference>
<dbReference type="InterPro" id="IPR025944">
    <property type="entry name" value="Sigma_54_int_dom_CS"/>
</dbReference>
<dbReference type="NCBIfam" id="NF003451">
    <property type="entry name" value="PRK05022.1"/>
    <property type="match status" value="1"/>
</dbReference>
<dbReference type="PANTHER" id="PTHR32071:SF35">
    <property type="entry name" value="ANAEROBIC NITRIC OXIDE REDUCTASE TRANSCRIPTION REGULATOR NORR"/>
    <property type="match status" value="1"/>
</dbReference>
<dbReference type="PANTHER" id="PTHR32071">
    <property type="entry name" value="TRANSCRIPTIONAL REGULATORY PROTEIN"/>
    <property type="match status" value="1"/>
</dbReference>
<dbReference type="Pfam" id="PF01590">
    <property type="entry name" value="GAF"/>
    <property type="match status" value="1"/>
</dbReference>
<dbReference type="Pfam" id="PF00158">
    <property type="entry name" value="Sigma54_activat"/>
    <property type="match status" value="1"/>
</dbReference>
<dbReference type="SMART" id="SM00382">
    <property type="entry name" value="AAA"/>
    <property type="match status" value="1"/>
</dbReference>
<dbReference type="SMART" id="SM00065">
    <property type="entry name" value="GAF"/>
    <property type="match status" value="1"/>
</dbReference>
<dbReference type="SUPFAM" id="SSF55781">
    <property type="entry name" value="GAF domain-like"/>
    <property type="match status" value="1"/>
</dbReference>
<dbReference type="SUPFAM" id="SSF46689">
    <property type="entry name" value="Homeodomain-like"/>
    <property type="match status" value="1"/>
</dbReference>
<dbReference type="SUPFAM" id="SSF52540">
    <property type="entry name" value="P-loop containing nucleoside triphosphate hydrolases"/>
    <property type="match status" value="1"/>
</dbReference>
<dbReference type="PROSITE" id="PS00675">
    <property type="entry name" value="SIGMA54_INTERACT_1"/>
    <property type="match status" value="1"/>
</dbReference>
<dbReference type="PROSITE" id="PS00676">
    <property type="entry name" value="SIGMA54_INTERACT_2"/>
    <property type="match status" value="1"/>
</dbReference>
<dbReference type="PROSITE" id="PS00688">
    <property type="entry name" value="SIGMA54_INTERACT_3"/>
    <property type="match status" value="1"/>
</dbReference>
<dbReference type="PROSITE" id="PS50045">
    <property type="entry name" value="SIGMA54_INTERACT_4"/>
    <property type="match status" value="1"/>
</dbReference>
<proteinExistence type="inferred from homology"/>
<name>NORR_SALSV</name>
<accession>B4TT16</accession>
<gene>
    <name evidence="1" type="primary">norR</name>
    <name type="ordered locus">SeSA_A2990</name>
</gene>
<reference key="1">
    <citation type="journal article" date="2011" name="J. Bacteriol.">
        <title>Comparative genomics of 28 Salmonella enterica isolates: evidence for CRISPR-mediated adaptive sublineage evolution.</title>
        <authorList>
            <person name="Fricke W.F."/>
            <person name="Mammel M.K."/>
            <person name="McDermott P.F."/>
            <person name="Tartera C."/>
            <person name="White D.G."/>
            <person name="Leclerc J.E."/>
            <person name="Ravel J."/>
            <person name="Cebula T.A."/>
        </authorList>
    </citation>
    <scope>NUCLEOTIDE SEQUENCE [LARGE SCALE GENOMIC DNA]</scope>
    <source>
        <strain>CVM19633</strain>
    </source>
</reference>
<evidence type="ECO:0000255" key="1">
    <source>
        <dbReference type="HAMAP-Rule" id="MF_01314"/>
    </source>
</evidence>